<name>UNG_AERHH</name>
<accession>A0KMZ1</accession>
<proteinExistence type="inferred from homology"/>
<dbReference type="EC" id="3.2.2.27" evidence="1"/>
<dbReference type="EMBL" id="CP000462">
    <property type="protein sequence ID" value="ABK36154.1"/>
    <property type="molecule type" value="Genomic_DNA"/>
</dbReference>
<dbReference type="RefSeq" id="WP_011706928.1">
    <property type="nucleotide sequence ID" value="NC_008570.1"/>
</dbReference>
<dbReference type="RefSeq" id="YP_857642.1">
    <property type="nucleotide sequence ID" value="NC_008570.1"/>
</dbReference>
<dbReference type="SMR" id="A0KMZ1"/>
<dbReference type="STRING" id="380703.AHA_3142"/>
<dbReference type="EnsemblBacteria" id="ABK36154">
    <property type="protein sequence ID" value="ABK36154"/>
    <property type="gene ID" value="AHA_3142"/>
</dbReference>
<dbReference type="GeneID" id="4489783"/>
<dbReference type="KEGG" id="aha:AHA_3142"/>
<dbReference type="PATRIC" id="fig|380703.7.peg.3143"/>
<dbReference type="eggNOG" id="COG0692">
    <property type="taxonomic scope" value="Bacteria"/>
</dbReference>
<dbReference type="HOGENOM" id="CLU_032162_3_1_6"/>
<dbReference type="OrthoDB" id="9804372at2"/>
<dbReference type="Proteomes" id="UP000000756">
    <property type="component" value="Chromosome"/>
</dbReference>
<dbReference type="GO" id="GO:0005737">
    <property type="term" value="C:cytoplasm"/>
    <property type="evidence" value="ECO:0007669"/>
    <property type="project" value="UniProtKB-SubCell"/>
</dbReference>
<dbReference type="GO" id="GO:0004844">
    <property type="term" value="F:uracil DNA N-glycosylase activity"/>
    <property type="evidence" value="ECO:0007669"/>
    <property type="project" value="UniProtKB-UniRule"/>
</dbReference>
<dbReference type="GO" id="GO:0097510">
    <property type="term" value="P:base-excision repair, AP site formation via deaminated base removal"/>
    <property type="evidence" value="ECO:0007669"/>
    <property type="project" value="TreeGrafter"/>
</dbReference>
<dbReference type="CDD" id="cd10027">
    <property type="entry name" value="UDG-F1-like"/>
    <property type="match status" value="1"/>
</dbReference>
<dbReference type="FunFam" id="3.40.470.10:FF:000001">
    <property type="entry name" value="Uracil-DNA glycosylase"/>
    <property type="match status" value="1"/>
</dbReference>
<dbReference type="Gene3D" id="3.40.470.10">
    <property type="entry name" value="Uracil-DNA glycosylase-like domain"/>
    <property type="match status" value="1"/>
</dbReference>
<dbReference type="HAMAP" id="MF_00148">
    <property type="entry name" value="UDG"/>
    <property type="match status" value="1"/>
</dbReference>
<dbReference type="InterPro" id="IPR002043">
    <property type="entry name" value="UDG_fam1"/>
</dbReference>
<dbReference type="InterPro" id="IPR018085">
    <property type="entry name" value="Ura-DNA_Glyclase_AS"/>
</dbReference>
<dbReference type="InterPro" id="IPR005122">
    <property type="entry name" value="Uracil-DNA_glycosylase-like"/>
</dbReference>
<dbReference type="InterPro" id="IPR036895">
    <property type="entry name" value="Uracil-DNA_glycosylase-like_sf"/>
</dbReference>
<dbReference type="NCBIfam" id="NF003588">
    <property type="entry name" value="PRK05254.1-1"/>
    <property type="match status" value="1"/>
</dbReference>
<dbReference type="NCBIfam" id="NF003589">
    <property type="entry name" value="PRK05254.1-2"/>
    <property type="match status" value="1"/>
</dbReference>
<dbReference type="NCBIfam" id="NF003591">
    <property type="entry name" value="PRK05254.1-4"/>
    <property type="match status" value="1"/>
</dbReference>
<dbReference type="NCBIfam" id="NF003592">
    <property type="entry name" value="PRK05254.1-5"/>
    <property type="match status" value="1"/>
</dbReference>
<dbReference type="NCBIfam" id="TIGR00628">
    <property type="entry name" value="ung"/>
    <property type="match status" value="1"/>
</dbReference>
<dbReference type="PANTHER" id="PTHR11264">
    <property type="entry name" value="URACIL-DNA GLYCOSYLASE"/>
    <property type="match status" value="1"/>
</dbReference>
<dbReference type="PANTHER" id="PTHR11264:SF0">
    <property type="entry name" value="URACIL-DNA GLYCOSYLASE"/>
    <property type="match status" value="1"/>
</dbReference>
<dbReference type="Pfam" id="PF03167">
    <property type="entry name" value="UDG"/>
    <property type="match status" value="1"/>
</dbReference>
<dbReference type="SMART" id="SM00986">
    <property type="entry name" value="UDG"/>
    <property type="match status" value="1"/>
</dbReference>
<dbReference type="SMART" id="SM00987">
    <property type="entry name" value="UreE_C"/>
    <property type="match status" value="1"/>
</dbReference>
<dbReference type="SUPFAM" id="SSF52141">
    <property type="entry name" value="Uracil-DNA glycosylase-like"/>
    <property type="match status" value="1"/>
</dbReference>
<dbReference type="PROSITE" id="PS00130">
    <property type="entry name" value="U_DNA_GLYCOSYLASE"/>
    <property type="match status" value="1"/>
</dbReference>
<keyword id="KW-0963">Cytoplasm</keyword>
<keyword id="KW-0227">DNA damage</keyword>
<keyword id="KW-0234">DNA repair</keyword>
<keyword id="KW-0378">Hydrolase</keyword>
<keyword id="KW-1185">Reference proteome</keyword>
<protein>
    <recommendedName>
        <fullName evidence="1">Uracil-DNA glycosylase</fullName>
        <shortName evidence="1">UDG</shortName>
        <ecNumber evidence="1">3.2.2.27</ecNumber>
    </recommendedName>
</protein>
<gene>
    <name evidence="1" type="primary">ung</name>
    <name type="ordered locus">AHA_3142</name>
</gene>
<sequence>MQTWTDVIGSEKEQDYFKATLATVRSEREAGKVIYPPATDVFNAFKLTELDQVKVVILGQDPYHGPNQAHGLCFSVLPGVRTPPSLVNIYKEMQRDLPGFVTPSHGFLESWAKQGVLLLNTVLTVQAGQAHSHAHLGWETFTDRVIEQINASCQGVVFLLWGAHAQKKGRFIDRQRHHVLSAPHPSPLSAHRGFIGCGHFSETNRLLSQQGMSPINWHSVCE</sequence>
<reference key="1">
    <citation type="journal article" date="2006" name="J. Bacteriol.">
        <title>Genome sequence of Aeromonas hydrophila ATCC 7966T: jack of all trades.</title>
        <authorList>
            <person name="Seshadri R."/>
            <person name="Joseph S.W."/>
            <person name="Chopra A.K."/>
            <person name="Sha J."/>
            <person name="Shaw J."/>
            <person name="Graf J."/>
            <person name="Haft D.H."/>
            <person name="Wu M."/>
            <person name="Ren Q."/>
            <person name="Rosovitz M.J."/>
            <person name="Madupu R."/>
            <person name="Tallon L."/>
            <person name="Kim M."/>
            <person name="Jin S."/>
            <person name="Vuong H."/>
            <person name="Stine O.C."/>
            <person name="Ali A."/>
            <person name="Horneman A.J."/>
            <person name="Heidelberg J.F."/>
        </authorList>
    </citation>
    <scope>NUCLEOTIDE SEQUENCE [LARGE SCALE GENOMIC DNA]</scope>
    <source>
        <strain>ATCC 7966 / DSM 30187 / BCRC 13018 / CCUG 14551 / JCM 1027 / KCTC 2358 / NCIMB 9240 / NCTC 8049</strain>
    </source>
</reference>
<feature type="chain" id="PRO_1000071496" description="Uracil-DNA glycosylase">
    <location>
        <begin position="1"/>
        <end position="222"/>
    </location>
</feature>
<feature type="active site" description="Proton acceptor" evidence="1">
    <location>
        <position position="61"/>
    </location>
</feature>
<organism>
    <name type="scientific">Aeromonas hydrophila subsp. hydrophila (strain ATCC 7966 / DSM 30187 / BCRC 13018 / CCUG 14551 / JCM 1027 / KCTC 2358 / NCIMB 9240 / NCTC 8049)</name>
    <dbReference type="NCBI Taxonomy" id="380703"/>
    <lineage>
        <taxon>Bacteria</taxon>
        <taxon>Pseudomonadati</taxon>
        <taxon>Pseudomonadota</taxon>
        <taxon>Gammaproteobacteria</taxon>
        <taxon>Aeromonadales</taxon>
        <taxon>Aeromonadaceae</taxon>
        <taxon>Aeromonas</taxon>
    </lineage>
</organism>
<evidence type="ECO:0000255" key="1">
    <source>
        <dbReference type="HAMAP-Rule" id="MF_00148"/>
    </source>
</evidence>
<comment type="function">
    <text evidence="1">Excises uracil residues from the DNA which can arise as a result of misincorporation of dUMP residues by DNA polymerase or due to deamination of cytosine.</text>
</comment>
<comment type="catalytic activity">
    <reaction evidence="1">
        <text>Hydrolyzes single-stranded DNA or mismatched double-stranded DNA and polynucleotides, releasing free uracil.</text>
        <dbReference type="EC" id="3.2.2.27"/>
    </reaction>
</comment>
<comment type="subcellular location">
    <subcellularLocation>
        <location evidence="1">Cytoplasm</location>
    </subcellularLocation>
</comment>
<comment type="similarity">
    <text evidence="1">Belongs to the uracil-DNA glycosylase (UDG) superfamily. UNG family.</text>
</comment>